<evidence type="ECO:0000250" key="1"/>
<evidence type="ECO:0000255" key="2"/>
<evidence type="ECO:0000305" key="3"/>
<reference key="1">
    <citation type="journal article" date="2002" name="Proc. Natl. Acad. Sci. U.S.A.">
        <title>The genome sequence of the facultative intracellular pathogen Brucella melitensis.</title>
        <authorList>
            <person name="DelVecchio V.G."/>
            <person name="Kapatral V."/>
            <person name="Redkar R.J."/>
            <person name="Patra G."/>
            <person name="Mujer C."/>
            <person name="Los T."/>
            <person name="Ivanova N."/>
            <person name="Anderson I."/>
            <person name="Bhattacharyya A."/>
            <person name="Lykidis A."/>
            <person name="Reznik G."/>
            <person name="Jablonski L."/>
            <person name="Larsen N."/>
            <person name="D'Souza M."/>
            <person name="Bernal A."/>
            <person name="Mazur M."/>
            <person name="Goltsman E."/>
            <person name="Selkov E."/>
            <person name="Elzer P.H."/>
            <person name="Hagius S."/>
            <person name="O'Callaghan D."/>
            <person name="Letesson J.-J."/>
            <person name="Haselkorn R."/>
            <person name="Kyrpides N.C."/>
            <person name="Overbeek R."/>
        </authorList>
    </citation>
    <scope>NUCLEOTIDE SEQUENCE [LARGE SCALE GENOMIC DNA]</scope>
    <source>
        <strain>ATCC 23456 / CCUG 17765 / NCTC 10094 / 16M</strain>
    </source>
</reference>
<dbReference type="EMBL" id="AE008918">
    <property type="protein sequence ID" value="AAL53294.1"/>
    <property type="status" value="ALT_INIT"/>
    <property type="molecule type" value="Genomic_DNA"/>
</dbReference>
<dbReference type="PIR" id="AC3516">
    <property type="entry name" value="AC3516"/>
</dbReference>
<dbReference type="RefSeq" id="WP_002966539.1">
    <property type="nucleotide sequence ID" value="NZ_GG703779.1"/>
</dbReference>
<dbReference type="SMR" id="Q8YDX1"/>
<dbReference type="KEGG" id="bme:BMEII0053"/>
<dbReference type="KEGG" id="bmel:DK63_3192"/>
<dbReference type="PATRIC" id="fig|224914.52.peg.3343"/>
<dbReference type="eggNOG" id="COG1285">
    <property type="taxonomic scope" value="Bacteria"/>
</dbReference>
<dbReference type="PhylomeDB" id="Q8YDX1"/>
<dbReference type="Proteomes" id="UP000000419">
    <property type="component" value="Chromosome II"/>
</dbReference>
<dbReference type="GO" id="GO:0005886">
    <property type="term" value="C:plasma membrane"/>
    <property type="evidence" value="ECO:0007669"/>
    <property type="project" value="UniProtKB-SubCell"/>
</dbReference>
<dbReference type="Gene3D" id="3.30.70.260">
    <property type="match status" value="1"/>
</dbReference>
<dbReference type="InterPro" id="IPR048640">
    <property type="entry name" value="MgtC-like_C"/>
</dbReference>
<dbReference type="InterPro" id="IPR003416">
    <property type="entry name" value="MgtC/SapB/SrpB/YhiD_fam"/>
</dbReference>
<dbReference type="InterPro" id="IPR049177">
    <property type="entry name" value="MgtC_SapB_SrpB_YhiD_N"/>
</dbReference>
<dbReference type="PANTHER" id="PTHR33778">
    <property type="entry name" value="PROTEIN MGTC"/>
    <property type="match status" value="1"/>
</dbReference>
<dbReference type="PANTHER" id="PTHR33778:SF3">
    <property type="entry name" value="PROTEIN MGTC"/>
    <property type="match status" value="1"/>
</dbReference>
<dbReference type="Pfam" id="PF02308">
    <property type="entry name" value="MgtC"/>
    <property type="match status" value="1"/>
</dbReference>
<dbReference type="Pfam" id="PF21770">
    <property type="entry name" value="MgtC_SapB_C"/>
    <property type="match status" value="1"/>
</dbReference>
<dbReference type="PRINTS" id="PR01837">
    <property type="entry name" value="MGTCSAPBPROT"/>
</dbReference>
<accession>Q8YDX1</accession>
<protein>
    <recommendedName>
        <fullName>Protein MgtC</fullName>
    </recommendedName>
</protein>
<sequence>MVWKPLAHTAACLAGAFLLGGLIGFERQFRHRLAGLRTNTLVAVGAATFVVFSSLVSGDSSPTRVAAQIVSGIGFLGAGIIFKEGFNVRGLNTAATLWCSAAVGVLCGAGLISHAAVATVFIIAVNALLRPLVQVLEFQAMRRGAFQPTYAIDIICHGDAEAQVRALLLRDIGDHLHIHELESSNIEGTNRVEVSATVRADQRQDRLLEQIVGHLSLEPRITSARWRIEDDSGGLSGL</sequence>
<proteinExistence type="inferred from homology"/>
<feature type="chain" id="PRO_0000250525" description="Protein MgtC">
    <location>
        <begin position="1"/>
        <end position="238"/>
    </location>
</feature>
<feature type="transmembrane region" description="Helical" evidence="2">
    <location>
        <begin position="5"/>
        <end position="25"/>
    </location>
</feature>
<feature type="transmembrane region" description="Helical" evidence="2">
    <location>
        <begin position="38"/>
        <end position="58"/>
    </location>
</feature>
<feature type="transmembrane region" description="Helical" evidence="2">
    <location>
        <begin position="66"/>
        <end position="86"/>
    </location>
</feature>
<feature type="transmembrane region" description="Helical" evidence="2">
    <location>
        <begin position="105"/>
        <end position="125"/>
    </location>
</feature>
<gene>
    <name type="primary">mgtC</name>
    <name type="ordered locus">BMEII0053</name>
</gene>
<organism>
    <name type="scientific">Brucella melitensis biotype 1 (strain ATCC 23456 / CCUG 17765 / NCTC 10094 / 16M)</name>
    <dbReference type="NCBI Taxonomy" id="224914"/>
    <lineage>
        <taxon>Bacteria</taxon>
        <taxon>Pseudomonadati</taxon>
        <taxon>Pseudomonadota</taxon>
        <taxon>Alphaproteobacteria</taxon>
        <taxon>Hyphomicrobiales</taxon>
        <taxon>Brucellaceae</taxon>
        <taxon>Brucella/Ochrobactrum group</taxon>
        <taxon>Brucella</taxon>
    </lineage>
</organism>
<name>MGTC_BRUME</name>
<comment type="function">
    <text evidence="1">Virulence factor required for growth in low Mg(2+) medium and for intramacrophage survival. May be involved in regulating membrane potential by activating Na(+)/K(+)-ATPase (By similarity).</text>
</comment>
<comment type="subcellular location">
    <subcellularLocation>
        <location evidence="3">Cell inner membrane</location>
        <topology evidence="3">Multi-pass membrane protein</topology>
    </subcellularLocation>
</comment>
<comment type="similarity">
    <text evidence="3">Belongs to the MgtC/SapB family.</text>
</comment>
<comment type="sequence caution" evidence="3">
    <conflict type="erroneous initiation">
        <sequence resource="EMBL-CDS" id="AAL53294"/>
    </conflict>
    <text>Extended N-terminus.</text>
</comment>
<keyword id="KW-0997">Cell inner membrane</keyword>
<keyword id="KW-1003">Cell membrane</keyword>
<keyword id="KW-0472">Membrane</keyword>
<keyword id="KW-0812">Transmembrane</keyword>
<keyword id="KW-1133">Transmembrane helix</keyword>
<keyword id="KW-0843">Virulence</keyword>